<dbReference type="EMBL" id="AABR03073135">
    <property type="status" value="NOT_ANNOTATED_CDS"/>
    <property type="molecule type" value="Genomic_DNA"/>
</dbReference>
<dbReference type="EMBL" id="AF223951">
    <property type="protein sequence ID" value="AAF28360.1"/>
    <property type="molecule type" value="mRNA"/>
</dbReference>
<dbReference type="RefSeq" id="NP_116007.1">
    <property type="nucleotide sequence ID" value="NM_032618.1"/>
</dbReference>
<dbReference type="SMR" id="Q9JKW1"/>
<dbReference type="FunCoup" id="Q9JKW1">
    <property type="interactions" value="3129"/>
</dbReference>
<dbReference type="STRING" id="10116.ENSRNOP00000010779"/>
<dbReference type="PhosphoSitePlus" id="Q9JKW1"/>
<dbReference type="jPOST" id="Q9JKW1"/>
<dbReference type="PaxDb" id="10116-ENSRNOP00000010779"/>
<dbReference type="Ensembl" id="ENSRNOT00000010778.8">
    <property type="protein sequence ID" value="ENSRNOP00000010779.5"/>
    <property type="gene ID" value="ENSRNOG00000007988.8"/>
</dbReference>
<dbReference type="GeneID" id="79463"/>
<dbReference type="KEGG" id="rno:79463"/>
<dbReference type="AGR" id="RGD:68406"/>
<dbReference type="CTD" id="29928"/>
<dbReference type="RGD" id="68406">
    <property type="gene designation" value="Timm22"/>
</dbReference>
<dbReference type="eggNOG" id="KOG3225">
    <property type="taxonomic scope" value="Eukaryota"/>
</dbReference>
<dbReference type="GeneTree" id="ENSGT00390000016067"/>
<dbReference type="HOGENOM" id="CLU_091077_0_0_1"/>
<dbReference type="InParanoid" id="Q9JKW1"/>
<dbReference type="OMA" id="VNPNMAD"/>
<dbReference type="OrthoDB" id="75343at2759"/>
<dbReference type="PhylomeDB" id="Q9JKW1"/>
<dbReference type="PRO" id="PR:Q9JKW1"/>
<dbReference type="Proteomes" id="UP000002494">
    <property type="component" value="Chromosome 10"/>
</dbReference>
<dbReference type="Bgee" id="ENSRNOG00000007988">
    <property type="expression patterns" value="Expressed in heart and 20 other cell types or tissues"/>
</dbReference>
<dbReference type="GO" id="GO:0005743">
    <property type="term" value="C:mitochondrial inner membrane"/>
    <property type="evidence" value="ECO:0000266"/>
    <property type="project" value="RGD"/>
</dbReference>
<dbReference type="GO" id="GO:0042721">
    <property type="term" value="C:TIM22 mitochondrial import inner membrane insertion complex"/>
    <property type="evidence" value="ECO:0000250"/>
    <property type="project" value="UniProtKB"/>
</dbReference>
<dbReference type="GO" id="GO:0030943">
    <property type="term" value="F:mitochondrion targeting sequence binding"/>
    <property type="evidence" value="ECO:0000318"/>
    <property type="project" value="GO_Central"/>
</dbReference>
<dbReference type="GO" id="GO:0008320">
    <property type="term" value="F:protein transmembrane transporter activity"/>
    <property type="evidence" value="ECO:0000318"/>
    <property type="project" value="GO_Central"/>
</dbReference>
<dbReference type="GO" id="GO:0140318">
    <property type="term" value="F:protein transporter activity"/>
    <property type="evidence" value="ECO:0000266"/>
    <property type="project" value="RGD"/>
</dbReference>
<dbReference type="GO" id="GO:0045039">
    <property type="term" value="P:protein insertion into mitochondrial inner membrane"/>
    <property type="evidence" value="ECO:0000250"/>
    <property type="project" value="UniProtKB"/>
</dbReference>
<dbReference type="InterPro" id="IPR039175">
    <property type="entry name" value="TIM22"/>
</dbReference>
<dbReference type="PANTHER" id="PTHR14110">
    <property type="entry name" value="MITOCHONDRIAL IMPORT INNER MEMBRANE TRANSLOCASE SUBUNIT TIM22"/>
    <property type="match status" value="1"/>
</dbReference>
<dbReference type="PANTHER" id="PTHR14110:SF0">
    <property type="entry name" value="MITOCHONDRIAL IMPORT INNER MEMBRANE TRANSLOCASE SUBUNIT TIM22"/>
    <property type="match status" value="1"/>
</dbReference>
<dbReference type="Pfam" id="PF02466">
    <property type="entry name" value="Tim17"/>
    <property type="match status" value="1"/>
</dbReference>
<keyword id="KW-1015">Disulfide bond</keyword>
<keyword id="KW-0472">Membrane</keyword>
<keyword id="KW-0496">Mitochondrion</keyword>
<keyword id="KW-0999">Mitochondrion inner membrane</keyword>
<keyword id="KW-0653">Protein transport</keyword>
<keyword id="KW-1185">Reference proteome</keyword>
<keyword id="KW-0811">Translocation</keyword>
<keyword id="KW-0812">Transmembrane</keyword>
<keyword id="KW-1133">Transmembrane helix</keyword>
<keyword id="KW-0813">Transport</keyword>
<feature type="chain" id="PRO_0000228081" description="Mitochondrial import inner membrane translocase subunit Tim22">
    <location>
        <begin position="1"/>
        <end position="192"/>
    </location>
</feature>
<feature type="transmembrane region" description="Helical" evidence="3">
    <location>
        <begin position="72"/>
        <end position="92"/>
    </location>
</feature>
<feature type="transmembrane region" description="Helical" evidence="3">
    <location>
        <begin position="123"/>
        <end position="141"/>
    </location>
</feature>
<feature type="transmembrane region" description="Helical" evidence="3">
    <location>
        <begin position="168"/>
        <end position="188"/>
    </location>
</feature>
<feature type="disulfide bond" evidence="2">
    <location>
        <begin position="67"/>
        <end position="139"/>
    </location>
</feature>
<feature type="disulfide bond" evidence="2">
    <location>
        <begin position="158"/>
        <end position="177"/>
    </location>
</feature>
<comment type="function">
    <text evidence="1">Essential core component of the TIM22 complex, a complex that mediates the import and insertion of multi-pass transmembrane proteins into the mitochondrial inner membrane. In the TIM22 complex, it constitutes the voltage-activated and signal-gated channel. Forms a twin-pore translocase that uses the membrane potential as external driving force in 2 voltage-dependent steps (By similarity).</text>
</comment>
<comment type="subunit">
    <text evidence="2">Component of the TIM22 complex, whose core is composed of TIMM22, associated with peripheral protein FXC1/TIMM10B and the 70 kDa heterohexamer. In most cases, the 70 kDa complex is composed of TIMM9 and TIMM10 (TIMM10A or TIMM10B). A small fraction of the 70 kDa complex is composed of TIMM8 (TIMM8A/DDP1 or TIMM8B/DDP2) and TIMM13. The TIM22 complex also contains AGK and TIMM29. Interacts directly with TIMM9, TIMM10A and FXC1/TIMM10B. Interacts (when oxidized) with TIMM29; interaction is direct.</text>
</comment>
<comment type="subcellular location">
    <subcellularLocation>
        <location evidence="2">Mitochondrion inner membrane</location>
        <topology evidence="3">Multi-pass membrane protein</topology>
    </subcellularLocation>
</comment>
<comment type="PTM">
    <text evidence="2">Disulfide bonds promote efficient assembly of the TIM22 complex.</text>
</comment>
<comment type="similarity">
    <text evidence="4">Belongs to the Tim17/Tim22/Tim23 family.</text>
</comment>
<sequence>MAAAKAGASAPEAAGSAEAPLQYSLLLQHLVGDKRQPRLLEPGSLGGIPSPAKSEEQKMIERAMESCAFKAVLACVGGFVLGGAFGVFTAGIDTNVGFDPKDPYRTPTAREVLKDMGQRGMSYAKNFAIVGAMFSCTECLVESYRGKSDWKNSVISGCITGGAIGFRAGVKAGAIGCGGFAAFSAAIDYYLR</sequence>
<gene>
    <name type="primary">Timm22</name>
    <name type="synonym">Tim22</name>
</gene>
<evidence type="ECO:0000250" key="1">
    <source>
        <dbReference type="UniProtKB" id="Q12328"/>
    </source>
</evidence>
<evidence type="ECO:0000250" key="2">
    <source>
        <dbReference type="UniProtKB" id="Q9Y584"/>
    </source>
</evidence>
<evidence type="ECO:0000255" key="3"/>
<evidence type="ECO:0000305" key="4"/>
<name>TIM22_RAT</name>
<reference key="1">
    <citation type="journal article" date="2004" name="Nature">
        <title>Genome sequence of the Brown Norway rat yields insights into mammalian evolution.</title>
        <authorList>
            <person name="Gibbs R.A."/>
            <person name="Weinstock G.M."/>
            <person name="Metzker M.L."/>
            <person name="Muzny D.M."/>
            <person name="Sodergren E.J."/>
            <person name="Scherer S."/>
            <person name="Scott G."/>
            <person name="Steffen D."/>
            <person name="Worley K.C."/>
            <person name="Burch P.E."/>
            <person name="Okwuonu G."/>
            <person name="Hines S."/>
            <person name="Lewis L."/>
            <person name="Deramo C."/>
            <person name="Delgado O."/>
            <person name="Dugan-Rocha S."/>
            <person name="Miner G."/>
            <person name="Morgan M."/>
            <person name="Hawes A."/>
            <person name="Gill R."/>
            <person name="Holt R.A."/>
            <person name="Adams M.D."/>
            <person name="Amanatides P.G."/>
            <person name="Baden-Tillson H."/>
            <person name="Barnstead M."/>
            <person name="Chin S."/>
            <person name="Evans C.A."/>
            <person name="Ferriera S."/>
            <person name="Fosler C."/>
            <person name="Glodek A."/>
            <person name="Gu Z."/>
            <person name="Jennings D."/>
            <person name="Kraft C.L."/>
            <person name="Nguyen T."/>
            <person name="Pfannkoch C.M."/>
            <person name="Sitter C."/>
            <person name="Sutton G.G."/>
            <person name="Venter J.C."/>
            <person name="Woodage T."/>
            <person name="Smith D."/>
            <person name="Lee H.-M."/>
            <person name="Gustafson E."/>
            <person name="Cahill P."/>
            <person name="Kana A."/>
            <person name="Doucette-Stamm L."/>
            <person name="Weinstock K."/>
            <person name="Fechtel K."/>
            <person name="Weiss R.B."/>
            <person name="Dunn D.M."/>
            <person name="Green E.D."/>
            <person name="Blakesley R.W."/>
            <person name="Bouffard G.G."/>
            <person name="De Jong P.J."/>
            <person name="Osoegawa K."/>
            <person name="Zhu B."/>
            <person name="Marra M."/>
            <person name="Schein J."/>
            <person name="Bosdet I."/>
            <person name="Fjell C."/>
            <person name="Jones S."/>
            <person name="Krzywinski M."/>
            <person name="Mathewson C."/>
            <person name="Siddiqui A."/>
            <person name="Wye N."/>
            <person name="McPherson J."/>
            <person name="Zhao S."/>
            <person name="Fraser C.M."/>
            <person name="Shetty J."/>
            <person name="Shatsman S."/>
            <person name="Geer K."/>
            <person name="Chen Y."/>
            <person name="Abramzon S."/>
            <person name="Nierman W.C."/>
            <person name="Havlak P.H."/>
            <person name="Chen R."/>
            <person name="Durbin K.J."/>
            <person name="Egan A."/>
            <person name="Ren Y."/>
            <person name="Song X.-Z."/>
            <person name="Li B."/>
            <person name="Liu Y."/>
            <person name="Qin X."/>
            <person name="Cawley S."/>
            <person name="Cooney A.J."/>
            <person name="D'Souza L.M."/>
            <person name="Martin K."/>
            <person name="Wu J.Q."/>
            <person name="Gonzalez-Garay M.L."/>
            <person name="Jackson A.R."/>
            <person name="Kalafus K.J."/>
            <person name="McLeod M.P."/>
            <person name="Milosavljevic A."/>
            <person name="Virk D."/>
            <person name="Volkov A."/>
            <person name="Wheeler D.A."/>
            <person name="Zhang Z."/>
            <person name="Bailey J.A."/>
            <person name="Eichler E.E."/>
            <person name="Tuzun E."/>
            <person name="Birney E."/>
            <person name="Mongin E."/>
            <person name="Ureta-Vidal A."/>
            <person name="Woodwark C."/>
            <person name="Zdobnov E."/>
            <person name="Bork P."/>
            <person name="Suyama M."/>
            <person name="Torrents D."/>
            <person name="Alexandersson M."/>
            <person name="Trask B.J."/>
            <person name="Young J.M."/>
            <person name="Huang H."/>
            <person name="Wang H."/>
            <person name="Xing H."/>
            <person name="Daniels S."/>
            <person name="Gietzen D."/>
            <person name="Schmidt J."/>
            <person name="Stevens K."/>
            <person name="Vitt U."/>
            <person name="Wingrove J."/>
            <person name="Camara F."/>
            <person name="Mar Alba M."/>
            <person name="Abril J.F."/>
            <person name="Guigo R."/>
            <person name="Smit A."/>
            <person name="Dubchak I."/>
            <person name="Rubin E.M."/>
            <person name="Couronne O."/>
            <person name="Poliakov A."/>
            <person name="Huebner N."/>
            <person name="Ganten D."/>
            <person name="Goesele C."/>
            <person name="Hummel O."/>
            <person name="Kreitler T."/>
            <person name="Lee Y.-A."/>
            <person name="Monti J."/>
            <person name="Schulz H."/>
            <person name="Zimdahl H."/>
            <person name="Himmelbauer H."/>
            <person name="Lehrach H."/>
            <person name="Jacob H.J."/>
            <person name="Bromberg S."/>
            <person name="Gullings-Handley J."/>
            <person name="Jensen-Seaman M.I."/>
            <person name="Kwitek A.E."/>
            <person name="Lazar J."/>
            <person name="Pasko D."/>
            <person name="Tonellato P.J."/>
            <person name="Twigger S."/>
            <person name="Ponting C.P."/>
            <person name="Duarte J.M."/>
            <person name="Rice S."/>
            <person name="Goodstadt L."/>
            <person name="Beatson S.A."/>
            <person name="Emes R.D."/>
            <person name="Winter E.E."/>
            <person name="Webber C."/>
            <person name="Brandt P."/>
            <person name="Nyakatura G."/>
            <person name="Adetobi M."/>
            <person name="Chiaromonte F."/>
            <person name="Elnitski L."/>
            <person name="Eswara P."/>
            <person name="Hardison R.C."/>
            <person name="Hou M."/>
            <person name="Kolbe D."/>
            <person name="Makova K."/>
            <person name="Miller W."/>
            <person name="Nekrutenko A."/>
            <person name="Riemer C."/>
            <person name="Schwartz S."/>
            <person name="Taylor J."/>
            <person name="Yang S."/>
            <person name="Zhang Y."/>
            <person name="Lindpaintner K."/>
            <person name="Andrews T.D."/>
            <person name="Caccamo M."/>
            <person name="Clamp M."/>
            <person name="Clarke L."/>
            <person name="Curwen V."/>
            <person name="Durbin R.M."/>
            <person name="Eyras E."/>
            <person name="Searle S.M."/>
            <person name="Cooper G.M."/>
            <person name="Batzoglou S."/>
            <person name="Brudno M."/>
            <person name="Sidow A."/>
            <person name="Stone E.A."/>
            <person name="Payseur B.A."/>
            <person name="Bourque G."/>
            <person name="Lopez-Otin C."/>
            <person name="Puente X.S."/>
            <person name="Chakrabarti K."/>
            <person name="Chatterji S."/>
            <person name="Dewey C."/>
            <person name="Pachter L."/>
            <person name="Bray N."/>
            <person name="Yap V.B."/>
            <person name="Caspi A."/>
            <person name="Tesler G."/>
            <person name="Pevzner P.A."/>
            <person name="Haussler D."/>
            <person name="Roskin K.M."/>
            <person name="Baertsch R."/>
            <person name="Clawson H."/>
            <person name="Furey T.S."/>
            <person name="Hinrichs A.S."/>
            <person name="Karolchik D."/>
            <person name="Kent W.J."/>
            <person name="Rosenbloom K.R."/>
            <person name="Trumbower H."/>
            <person name="Weirauch M."/>
            <person name="Cooper D.N."/>
            <person name="Stenson P.D."/>
            <person name="Ma B."/>
            <person name="Brent M."/>
            <person name="Arumugam M."/>
            <person name="Shteynberg D."/>
            <person name="Copley R.R."/>
            <person name="Taylor M.S."/>
            <person name="Riethman H."/>
            <person name="Mudunuri U."/>
            <person name="Peterson J."/>
            <person name="Guyer M."/>
            <person name="Felsenfeld A."/>
            <person name="Old S."/>
            <person name="Mockrin S."/>
            <person name="Collins F.S."/>
        </authorList>
    </citation>
    <scope>NUCLEOTIDE SEQUENCE [LARGE SCALE GENOMIC DNA]</scope>
    <source>
        <strain>Brown Norway</strain>
    </source>
</reference>
<reference key="2">
    <citation type="journal article" date="1999" name="FEBS Lett.">
        <title>The mitochondrial TIM22 preprotein translocase is highly conserved throughout the eukaryotic kingdom.</title>
        <authorList>
            <person name="Bauer M.F."/>
            <person name="Rothbauer U."/>
            <person name="Muehlenbein N."/>
            <person name="Smith R.J.H."/>
            <person name="Gerbitz K.-D."/>
            <person name="Neupert W."/>
            <person name="Brunner M."/>
            <person name="Hofmann S."/>
        </authorList>
    </citation>
    <scope>NUCLEOTIDE SEQUENCE [MRNA] OF 3-192</scope>
</reference>
<accession>Q9JKW1</accession>
<protein>
    <recommendedName>
        <fullName>Mitochondrial import inner membrane translocase subunit Tim22</fullName>
    </recommendedName>
</protein>
<organism>
    <name type="scientific">Rattus norvegicus</name>
    <name type="common">Rat</name>
    <dbReference type="NCBI Taxonomy" id="10116"/>
    <lineage>
        <taxon>Eukaryota</taxon>
        <taxon>Metazoa</taxon>
        <taxon>Chordata</taxon>
        <taxon>Craniata</taxon>
        <taxon>Vertebrata</taxon>
        <taxon>Euteleostomi</taxon>
        <taxon>Mammalia</taxon>
        <taxon>Eutheria</taxon>
        <taxon>Euarchontoglires</taxon>
        <taxon>Glires</taxon>
        <taxon>Rodentia</taxon>
        <taxon>Myomorpha</taxon>
        <taxon>Muroidea</taxon>
        <taxon>Muridae</taxon>
        <taxon>Murinae</taxon>
        <taxon>Rattus</taxon>
    </lineage>
</organism>
<proteinExistence type="evidence at transcript level"/>